<dbReference type="EC" id="2.4.2.59" evidence="1"/>
<dbReference type="EMBL" id="AE009441">
    <property type="protein sequence ID" value="AAL62614.1"/>
    <property type="molecule type" value="Genomic_DNA"/>
</dbReference>
<dbReference type="RefSeq" id="WP_011007086.1">
    <property type="nucleotide sequence ID" value="NC_003364.1"/>
</dbReference>
<dbReference type="SMR" id="Q8ZZM5"/>
<dbReference type="FunCoup" id="Q8ZZM5">
    <property type="interactions" value="113"/>
</dbReference>
<dbReference type="STRING" id="178306.PAE0175"/>
<dbReference type="EnsemblBacteria" id="AAL62614">
    <property type="protein sequence ID" value="AAL62614"/>
    <property type="gene ID" value="PAE0175"/>
</dbReference>
<dbReference type="GeneID" id="1464832"/>
<dbReference type="KEGG" id="pai:PAE0175"/>
<dbReference type="PATRIC" id="fig|178306.9.peg.126"/>
<dbReference type="eggNOG" id="arCOG00574">
    <property type="taxonomic scope" value="Archaea"/>
</dbReference>
<dbReference type="HOGENOM" id="CLU_053727_2_0_2"/>
<dbReference type="InParanoid" id="Q8ZZM5"/>
<dbReference type="UniPathway" id="UPA00060"/>
<dbReference type="Proteomes" id="UP000002439">
    <property type="component" value="Chromosome"/>
</dbReference>
<dbReference type="GO" id="GO:0005506">
    <property type="term" value="F:iron ion binding"/>
    <property type="evidence" value="ECO:0000318"/>
    <property type="project" value="GO_Central"/>
</dbReference>
<dbReference type="GO" id="GO:0016763">
    <property type="term" value="F:pentosyltransferase activity"/>
    <property type="evidence" value="ECO:0007669"/>
    <property type="project" value="UniProtKB-UniRule"/>
</dbReference>
<dbReference type="GO" id="GO:0009228">
    <property type="term" value="P:thiamine biosynthetic process"/>
    <property type="evidence" value="ECO:0007669"/>
    <property type="project" value="UniProtKB-KW"/>
</dbReference>
<dbReference type="GO" id="GO:0009229">
    <property type="term" value="P:thiamine diphosphate biosynthetic process"/>
    <property type="evidence" value="ECO:0007669"/>
    <property type="project" value="UniProtKB-UniRule"/>
</dbReference>
<dbReference type="GO" id="GO:0052837">
    <property type="term" value="P:thiazole biosynthetic process"/>
    <property type="evidence" value="ECO:0000318"/>
    <property type="project" value="GO_Central"/>
</dbReference>
<dbReference type="Gene3D" id="3.50.50.60">
    <property type="entry name" value="FAD/NAD(P)-binding domain"/>
    <property type="match status" value="1"/>
</dbReference>
<dbReference type="HAMAP" id="MF_00304">
    <property type="entry name" value="Thi4"/>
    <property type="match status" value="1"/>
</dbReference>
<dbReference type="InterPro" id="IPR036188">
    <property type="entry name" value="FAD/NAD-bd_sf"/>
</dbReference>
<dbReference type="InterPro" id="IPR002922">
    <property type="entry name" value="Thi4_fam"/>
</dbReference>
<dbReference type="InterPro" id="IPR022828">
    <property type="entry name" value="Thi4_prok"/>
</dbReference>
<dbReference type="NCBIfam" id="TIGR00292">
    <property type="entry name" value="sulfide-dependent adenosine diphosphate thiazole synthase"/>
    <property type="match status" value="1"/>
</dbReference>
<dbReference type="PANTHER" id="PTHR43422">
    <property type="entry name" value="THIAMINE THIAZOLE SYNTHASE"/>
    <property type="match status" value="1"/>
</dbReference>
<dbReference type="PANTHER" id="PTHR43422:SF3">
    <property type="entry name" value="THIAMINE THIAZOLE SYNTHASE"/>
    <property type="match status" value="1"/>
</dbReference>
<dbReference type="Pfam" id="PF01946">
    <property type="entry name" value="Thi4"/>
    <property type="match status" value="1"/>
</dbReference>
<dbReference type="PRINTS" id="PR00419">
    <property type="entry name" value="ADXRDTASE"/>
</dbReference>
<dbReference type="SUPFAM" id="SSF51905">
    <property type="entry name" value="FAD/NAD(P)-binding domain"/>
    <property type="match status" value="1"/>
</dbReference>
<reference key="1">
    <citation type="journal article" date="2002" name="Proc. Natl. Acad. Sci. U.S.A.">
        <title>Genome sequence of the hyperthermophilic crenarchaeon Pyrobaculum aerophilum.</title>
        <authorList>
            <person name="Fitz-Gibbon S.T."/>
            <person name="Ladner H."/>
            <person name="Kim U.-J."/>
            <person name="Stetter K.O."/>
            <person name="Simon M.I."/>
            <person name="Miller J.H."/>
        </authorList>
    </citation>
    <scope>NUCLEOTIDE SEQUENCE [LARGE SCALE GENOMIC DNA]</scope>
    <source>
        <strain>ATCC 51768 / DSM 7523 / JCM 9630 / CIP 104966 / NBRC 100827 / IM2</strain>
    </source>
</reference>
<feature type="chain" id="PRO_1000115613" description="Thiamine thiazole synthase">
    <location>
        <begin position="1"/>
        <end position="261"/>
    </location>
</feature>
<feature type="binding site" description="in other chain" evidence="1">
    <location>
        <position position="33"/>
    </location>
    <ligand>
        <name>NAD(+)</name>
        <dbReference type="ChEBI" id="CHEBI:57540"/>
        <note>ligand shared between two adjacent protomers</note>
    </ligand>
</feature>
<feature type="binding site" description="in other chain" evidence="1">
    <location>
        <begin position="52"/>
        <end position="53"/>
    </location>
    <ligand>
        <name>NAD(+)</name>
        <dbReference type="ChEBI" id="CHEBI:57540"/>
        <note>ligand shared between two adjacent protomers</note>
    </ligand>
</feature>
<feature type="binding site" description="in other chain" evidence="1">
    <location>
        <position position="60"/>
    </location>
    <ligand>
        <name>NAD(+)</name>
        <dbReference type="ChEBI" id="CHEBI:57540"/>
        <note>ligand shared between two adjacent protomers</note>
    </ligand>
</feature>
<feature type="binding site" description="in other chain" evidence="1">
    <location>
        <position position="124"/>
    </location>
    <ligand>
        <name>NAD(+)</name>
        <dbReference type="ChEBI" id="CHEBI:57540"/>
        <note>ligand shared between two adjacent protomers</note>
    </ligand>
</feature>
<feature type="binding site" evidence="1">
    <location>
        <begin position="152"/>
        <end position="154"/>
    </location>
    <ligand>
        <name>NAD(+)</name>
        <dbReference type="ChEBI" id="CHEBI:57540"/>
        <note>ligand shared between two adjacent protomers</note>
    </ligand>
</feature>
<feature type="binding site" evidence="1">
    <location>
        <position position="154"/>
    </location>
    <ligand>
        <name>Fe cation</name>
        <dbReference type="ChEBI" id="CHEBI:24875"/>
        <note>ligand shared between two adjacent protomers</note>
    </ligand>
</feature>
<feature type="binding site" description="in other chain" evidence="1">
    <location>
        <position position="169"/>
    </location>
    <ligand>
        <name>Fe cation</name>
        <dbReference type="ChEBI" id="CHEBI:24875"/>
        <note>ligand shared between two adjacent protomers</note>
    </ligand>
</feature>
<feature type="binding site" description="in other chain" evidence="1">
    <location>
        <position position="219"/>
    </location>
    <ligand>
        <name>NAD(+)</name>
        <dbReference type="ChEBI" id="CHEBI:57540"/>
        <note>ligand shared between two adjacent protomers</note>
    </ligand>
</feature>
<feature type="binding site" evidence="1">
    <location>
        <position position="229"/>
    </location>
    <ligand>
        <name>glycine</name>
        <dbReference type="ChEBI" id="CHEBI:57305"/>
    </ligand>
</feature>
<name>THI4_PYRAE</name>
<proteinExistence type="inferred from homology"/>
<organism>
    <name type="scientific">Pyrobaculum aerophilum (strain ATCC 51768 / DSM 7523 / JCM 9630 / CIP 104966 / NBRC 100827 / IM2)</name>
    <dbReference type="NCBI Taxonomy" id="178306"/>
    <lineage>
        <taxon>Archaea</taxon>
        <taxon>Thermoproteota</taxon>
        <taxon>Thermoprotei</taxon>
        <taxon>Thermoproteales</taxon>
        <taxon>Thermoproteaceae</taxon>
        <taxon>Pyrobaculum</taxon>
    </lineage>
</organism>
<evidence type="ECO:0000255" key="1">
    <source>
        <dbReference type="HAMAP-Rule" id="MF_00304"/>
    </source>
</evidence>
<accession>Q8ZZM5</accession>
<gene>
    <name evidence="1" type="primary">thi4</name>
    <name type="ordered locus">PAE0175</name>
</gene>
<comment type="function">
    <text evidence="1">Involved in the biosynthesis of the thiazole moiety of thiamine. Catalyzes the conversion of NAD and glycine to adenosine diphosphate 5-(2-hydroxyethyl)-4-methylthiazole-2-carboxylate (ADT), an adenylated thiazole intermediate, using free sulfide as a source of sulfur.</text>
</comment>
<comment type="catalytic activity">
    <reaction evidence="1">
        <text>hydrogen sulfide + glycine + NAD(+) = ADP-5-ethyl-4-methylthiazole-2-carboxylate + nicotinamide + 3 H2O + H(+)</text>
        <dbReference type="Rhea" id="RHEA:55704"/>
        <dbReference type="ChEBI" id="CHEBI:15377"/>
        <dbReference type="ChEBI" id="CHEBI:15378"/>
        <dbReference type="ChEBI" id="CHEBI:17154"/>
        <dbReference type="ChEBI" id="CHEBI:29919"/>
        <dbReference type="ChEBI" id="CHEBI:57305"/>
        <dbReference type="ChEBI" id="CHEBI:57540"/>
        <dbReference type="ChEBI" id="CHEBI:139151"/>
        <dbReference type="EC" id="2.4.2.59"/>
    </reaction>
</comment>
<comment type="cofactor">
    <cofactor evidence="1">
        <name>Fe(2+)</name>
        <dbReference type="ChEBI" id="CHEBI:29033"/>
    </cofactor>
</comment>
<comment type="pathway">
    <text evidence="1">Cofactor biosynthesis; thiamine diphosphate biosynthesis.</text>
</comment>
<comment type="subunit">
    <text evidence="1">Homooctamer; tetramer of dimers.</text>
</comment>
<comment type="similarity">
    <text evidence="1">Belongs to the THI4 family.</text>
</comment>
<keyword id="KW-0408">Iron</keyword>
<keyword id="KW-0479">Metal-binding</keyword>
<keyword id="KW-0520">NAD</keyword>
<keyword id="KW-1185">Reference proteome</keyword>
<keyword id="KW-0784">Thiamine biosynthesis</keyword>
<keyword id="KW-0808">Transferase</keyword>
<sequence>MELKIGRAIISHALKDLDEYSDVDVAIVGAGPAGLTAARYLAEKGLKVVVYERRFSFGGGIGPGGNMLPKIVVQEEAVPILRDFKVRYKPAEDGLYTVDPAELIAKLAAGAVDAGAKIILGVHVDDVIFRGDPPRVTGLLWIWTPIQMSGMHVDPLYTQAKAVIDATGHDAEVVSVAARKVPELGIQVVGEKSAWSEVSEKLVVEHTGRVAPGLYVAGIAVCAVYGLPRMGPIFGGMLMSGKKVAEVVYKDLMAEAHAVRA</sequence>
<protein>
    <recommendedName>
        <fullName evidence="1">Thiamine thiazole synthase</fullName>
        <ecNumber evidence="1">2.4.2.59</ecNumber>
    </recommendedName>
</protein>